<organism>
    <name type="scientific">Riptortus clavatus</name>
    <name type="common">Bean bug</name>
    <dbReference type="NCBI Taxonomy" id="41704"/>
    <lineage>
        <taxon>Eukaryota</taxon>
        <taxon>Metazoa</taxon>
        <taxon>Ecdysozoa</taxon>
        <taxon>Arthropoda</taxon>
        <taxon>Hexapoda</taxon>
        <taxon>Insecta</taxon>
        <taxon>Pterygota</taxon>
        <taxon>Neoptera</taxon>
        <taxon>Paraneoptera</taxon>
        <taxon>Hemiptera</taxon>
        <taxon>Heteroptera</taxon>
        <taxon>Panheteroptera</taxon>
        <taxon>Pentatomomorpha</taxon>
        <taxon>Coreoidea</taxon>
        <taxon>Alydidae</taxon>
        <taxon>Riptortus</taxon>
    </lineage>
</organism>
<feature type="signal peptide" evidence="1">
    <location>
        <begin position="1"/>
        <end position="19"/>
    </location>
</feature>
<feature type="chain" id="PRO_0000004985" description="Probable antibacterial peptide">
    <location>
        <begin position="20"/>
        <end position="150"/>
    </location>
</feature>
<accession>Q27906</accession>
<sequence length="150" mass="16367">MHIARFCLLSSMAVLALSAGYVSGAVIEIPDEILDSARFISLYSDGLRQKRQLNLSGPGSEHAGTIRLDGQRNIFDNGRTRVDGTGSYQLDYARGMKPIHGAGLGAEVNHNIWRGRGGQSLDLYGGATRQFNFGNRPNEWGAHGGIRYNF</sequence>
<proteinExistence type="evidence at transcript level"/>
<comment type="function">
    <text>Has antibacterial activity in vitro.</text>
</comment>
<comment type="subcellular location">
    <subcellularLocation>
        <location evidence="2">Secreted</location>
    </subcellularLocation>
</comment>
<protein>
    <recommendedName>
        <fullName>Probable antibacterial peptide</fullName>
    </recommendedName>
</protein>
<reference key="1">
    <citation type="journal article" date="1996" name="Zool. Sci.">
        <title>Cloning of mRNA sequences for two antibacterial peptides in a hemipteran insect, Riptortus clavatus.</title>
        <authorList>
            <person name="Miura K."/>
            <person name="Ueno S."/>
            <person name="Kamiya K."/>
            <person name="Kobayashi J."/>
            <person name="Matsuoka H."/>
            <person name="Ando K."/>
            <person name="Chinzei Y."/>
        </authorList>
    </citation>
    <scope>NUCLEOTIDE SEQUENCE [MRNA]</scope>
    <source>
        <tissue>Fat body</tissue>
    </source>
</reference>
<name>ABP2_RIPCL</name>
<evidence type="ECO:0000255" key="1"/>
<evidence type="ECO:0000305" key="2"/>
<keyword id="KW-0044">Antibiotic</keyword>
<keyword id="KW-0929">Antimicrobial</keyword>
<keyword id="KW-0391">Immunity</keyword>
<keyword id="KW-0399">Innate immunity</keyword>
<keyword id="KW-0964">Secreted</keyword>
<keyword id="KW-0732">Signal</keyword>
<dbReference type="EMBL" id="D49929">
    <property type="protein sequence ID" value="BAA08667.1"/>
    <property type="molecule type" value="mRNA"/>
</dbReference>
<dbReference type="GO" id="GO:0005576">
    <property type="term" value="C:extracellular region"/>
    <property type="evidence" value="ECO:0007669"/>
    <property type="project" value="UniProtKB-SubCell"/>
</dbReference>
<dbReference type="GO" id="GO:0042742">
    <property type="term" value="P:defense response to bacterium"/>
    <property type="evidence" value="ECO:0007669"/>
    <property type="project" value="UniProtKB-KW"/>
</dbReference>
<dbReference type="GO" id="GO:0045087">
    <property type="term" value="P:innate immune response"/>
    <property type="evidence" value="ECO:0007669"/>
    <property type="project" value="UniProtKB-KW"/>
</dbReference>